<evidence type="ECO:0000255" key="1">
    <source>
        <dbReference type="HAMAP-Rule" id="MF_00004"/>
    </source>
</evidence>
<gene>
    <name evidence="1" type="primary">apt</name>
    <name type="ordered locus">BL0731</name>
</gene>
<keyword id="KW-0963">Cytoplasm</keyword>
<keyword id="KW-0328">Glycosyltransferase</keyword>
<keyword id="KW-0660">Purine salvage</keyword>
<keyword id="KW-1185">Reference proteome</keyword>
<keyword id="KW-0808">Transferase</keyword>
<organism>
    <name type="scientific">Bifidobacterium longum (strain NCC 2705)</name>
    <dbReference type="NCBI Taxonomy" id="206672"/>
    <lineage>
        <taxon>Bacteria</taxon>
        <taxon>Bacillati</taxon>
        <taxon>Actinomycetota</taxon>
        <taxon>Actinomycetes</taxon>
        <taxon>Bifidobacteriales</taxon>
        <taxon>Bifidobacteriaceae</taxon>
        <taxon>Bifidobacterium</taxon>
    </lineage>
</organism>
<name>APT_BIFLO</name>
<comment type="function">
    <text evidence="1">Catalyzes a salvage reaction resulting in the formation of AMP, that is energically less costly than de novo synthesis.</text>
</comment>
<comment type="catalytic activity">
    <reaction evidence="1">
        <text>AMP + diphosphate = 5-phospho-alpha-D-ribose 1-diphosphate + adenine</text>
        <dbReference type="Rhea" id="RHEA:16609"/>
        <dbReference type="ChEBI" id="CHEBI:16708"/>
        <dbReference type="ChEBI" id="CHEBI:33019"/>
        <dbReference type="ChEBI" id="CHEBI:58017"/>
        <dbReference type="ChEBI" id="CHEBI:456215"/>
        <dbReference type="EC" id="2.4.2.7"/>
    </reaction>
</comment>
<comment type="pathway">
    <text evidence="1">Purine metabolism; AMP biosynthesis via salvage pathway; AMP from adenine: step 1/1.</text>
</comment>
<comment type="subunit">
    <text evidence="1">Homodimer.</text>
</comment>
<comment type="subcellular location">
    <subcellularLocation>
        <location evidence="1">Cytoplasm</location>
    </subcellularLocation>
</comment>
<comment type="similarity">
    <text evidence="1">Belongs to the purine/pyrimidine phosphoribosyltransferase family.</text>
</comment>
<dbReference type="EC" id="2.4.2.7" evidence="1"/>
<dbReference type="EMBL" id="AE014295">
    <property type="protein sequence ID" value="AAN24548.1"/>
    <property type="molecule type" value="Genomic_DNA"/>
</dbReference>
<dbReference type="RefSeq" id="NP_695912.1">
    <property type="nucleotide sequence ID" value="NC_004307.2"/>
</dbReference>
<dbReference type="RefSeq" id="WP_011068112.1">
    <property type="nucleotide sequence ID" value="NC_004307.2"/>
</dbReference>
<dbReference type="SMR" id="Q8G6B5"/>
<dbReference type="STRING" id="206672.BL0731"/>
<dbReference type="EnsemblBacteria" id="AAN24548">
    <property type="protein sequence ID" value="AAN24548"/>
    <property type="gene ID" value="BL0731"/>
</dbReference>
<dbReference type="KEGG" id="blo:BL0731"/>
<dbReference type="PATRIC" id="fig|206672.9.peg.428"/>
<dbReference type="HOGENOM" id="CLU_063339_3_2_11"/>
<dbReference type="OrthoDB" id="9803963at2"/>
<dbReference type="PhylomeDB" id="Q8G6B5"/>
<dbReference type="UniPathway" id="UPA00588">
    <property type="reaction ID" value="UER00646"/>
</dbReference>
<dbReference type="Proteomes" id="UP000000439">
    <property type="component" value="Chromosome"/>
</dbReference>
<dbReference type="GO" id="GO:0005737">
    <property type="term" value="C:cytoplasm"/>
    <property type="evidence" value="ECO:0007669"/>
    <property type="project" value="UniProtKB-SubCell"/>
</dbReference>
<dbReference type="GO" id="GO:0002055">
    <property type="term" value="F:adenine binding"/>
    <property type="evidence" value="ECO:0007669"/>
    <property type="project" value="TreeGrafter"/>
</dbReference>
<dbReference type="GO" id="GO:0003999">
    <property type="term" value="F:adenine phosphoribosyltransferase activity"/>
    <property type="evidence" value="ECO:0007669"/>
    <property type="project" value="UniProtKB-UniRule"/>
</dbReference>
<dbReference type="GO" id="GO:0016208">
    <property type="term" value="F:AMP binding"/>
    <property type="evidence" value="ECO:0007669"/>
    <property type="project" value="TreeGrafter"/>
</dbReference>
<dbReference type="GO" id="GO:0006168">
    <property type="term" value="P:adenine salvage"/>
    <property type="evidence" value="ECO:0007669"/>
    <property type="project" value="InterPro"/>
</dbReference>
<dbReference type="GO" id="GO:0044209">
    <property type="term" value="P:AMP salvage"/>
    <property type="evidence" value="ECO:0007669"/>
    <property type="project" value="UniProtKB-UniRule"/>
</dbReference>
<dbReference type="GO" id="GO:0006166">
    <property type="term" value="P:purine ribonucleoside salvage"/>
    <property type="evidence" value="ECO:0007669"/>
    <property type="project" value="UniProtKB-KW"/>
</dbReference>
<dbReference type="CDD" id="cd06223">
    <property type="entry name" value="PRTases_typeI"/>
    <property type="match status" value="1"/>
</dbReference>
<dbReference type="FunFam" id="3.40.50.2020:FF:000004">
    <property type="entry name" value="Adenine phosphoribosyltransferase"/>
    <property type="match status" value="1"/>
</dbReference>
<dbReference type="Gene3D" id="3.40.50.2020">
    <property type="match status" value="1"/>
</dbReference>
<dbReference type="HAMAP" id="MF_00004">
    <property type="entry name" value="Aden_phosphoribosyltr"/>
    <property type="match status" value="1"/>
</dbReference>
<dbReference type="InterPro" id="IPR005764">
    <property type="entry name" value="Ade_phspho_trans"/>
</dbReference>
<dbReference type="InterPro" id="IPR000836">
    <property type="entry name" value="PRibTrfase_dom"/>
</dbReference>
<dbReference type="InterPro" id="IPR029057">
    <property type="entry name" value="PRTase-like"/>
</dbReference>
<dbReference type="InterPro" id="IPR050054">
    <property type="entry name" value="UPRTase/APRTase"/>
</dbReference>
<dbReference type="NCBIfam" id="TIGR01090">
    <property type="entry name" value="apt"/>
    <property type="match status" value="1"/>
</dbReference>
<dbReference type="NCBIfam" id="NF002634">
    <property type="entry name" value="PRK02304.1-3"/>
    <property type="match status" value="1"/>
</dbReference>
<dbReference type="NCBIfam" id="NF002636">
    <property type="entry name" value="PRK02304.1-5"/>
    <property type="match status" value="1"/>
</dbReference>
<dbReference type="PANTHER" id="PTHR32315">
    <property type="entry name" value="ADENINE PHOSPHORIBOSYLTRANSFERASE"/>
    <property type="match status" value="1"/>
</dbReference>
<dbReference type="PANTHER" id="PTHR32315:SF3">
    <property type="entry name" value="ADENINE PHOSPHORIBOSYLTRANSFERASE"/>
    <property type="match status" value="1"/>
</dbReference>
<dbReference type="Pfam" id="PF00156">
    <property type="entry name" value="Pribosyltran"/>
    <property type="match status" value="1"/>
</dbReference>
<dbReference type="SUPFAM" id="SSF53271">
    <property type="entry name" value="PRTase-like"/>
    <property type="match status" value="1"/>
</dbReference>
<dbReference type="PROSITE" id="PS00103">
    <property type="entry name" value="PUR_PYR_PR_TRANSFER"/>
    <property type="match status" value="1"/>
</dbReference>
<proteinExistence type="inferred from homology"/>
<accession>Q8G6B5</accession>
<reference key="1">
    <citation type="journal article" date="2002" name="Proc. Natl. Acad. Sci. U.S.A.">
        <title>The genome sequence of Bifidobacterium longum reflects its adaptation to the human gastrointestinal tract.</title>
        <authorList>
            <person name="Schell M.A."/>
            <person name="Karmirantzou M."/>
            <person name="Snel B."/>
            <person name="Vilanova D."/>
            <person name="Berger B."/>
            <person name="Pessi G."/>
            <person name="Zwahlen M.-C."/>
            <person name="Desiere F."/>
            <person name="Bork P."/>
            <person name="Delley M."/>
            <person name="Pridmore R.D."/>
            <person name="Arigoni F."/>
        </authorList>
    </citation>
    <scope>NUCLEOTIDE SEQUENCE [LARGE SCALE GENOMIC DNA]</scope>
    <source>
        <strain>NCC 2705</strain>
    </source>
</reference>
<sequence length="193" mass="20251">MAQSDITIDALSKVGQQDAEYLVSLVRSVPGFPKEGIIFRDFMPVLADPKGLKILLKALEEALPVSPSEFDSIAGLESRGFLFGPVMAAHLGKGFIAVRKAGKLPPETIGESYDLEYGTASVEIETDAVQAGKRVLIVDDLIATGGTAKAATDLIEKAGGTVVGFSFVMRLDGLDGLDKLDGKPSSSLIAMPA</sequence>
<feature type="chain" id="PRO_0000149357" description="Adenine phosphoribosyltransferase">
    <location>
        <begin position="1"/>
        <end position="193"/>
    </location>
</feature>
<protein>
    <recommendedName>
        <fullName evidence="1">Adenine phosphoribosyltransferase</fullName>
        <shortName evidence="1">APRT</shortName>
        <ecNumber evidence="1">2.4.2.7</ecNumber>
    </recommendedName>
</protein>